<comment type="function">
    <text evidence="1">Catalyzes the reversible isomerization of glucose-6-phosphate to fructose-6-phosphate.</text>
</comment>
<comment type="catalytic activity">
    <reaction evidence="1">
        <text>alpha-D-glucose 6-phosphate = beta-D-fructose 6-phosphate</text>
        <dbReference type="Rhea" id="RHEA:11816"/>
        <dbReference type="ChEBI" id="CHEBI:57634"/>
        <dbReference type="ChEBI" id="CHEBI:58225"/>
        <dbReference type="EC" id="5.3.1.9"/>
    </reaction>
</comment>
<comment type="pathway">
    <text evidence="1">Carbohydrate biosynthesis; gluconeogenesis.</text>
</comment>
<comment type="pathway">
    <text evidence="1">Carbohydrate degradation; glycolysis; D-glyceraldehyde 3-phosphate and glycerone phosphate from D-glucose: step 2/4.</text>
</comment>
<comment type="subcellular location">
    <subcellularLocation>
        <location evidence="1">Cytoplasm</location>
    </subcellularLocation>
</comment>
<comment type="similarity">
    <text evidence="1">Belongs to the GPI family.</text>
</comment>
<sequence>MNSPLPDITATDEWSALKDNAKSIESTTLRDLFANDQDRAKNLSFSVADLHVDLSKNLINDDTLTALIALAKKADLEDHREAMFSGRHINSTEDRAVLHTALRLPAEESLHVDEQNVAADVHDVLARMRDFAHALRSGEWLGVTGHTIKTVVNIGIGGSDLGPAMTTQALRSFATAGISGRFVSNVDPADFTSKVADLDPAETLFVVASKTFTTQETLANAHAARRWFLDSLHLEDGTDEANDAIAKHFVAVSTNAEKVSEFGIDTNNMFGFWDWVGGRYSVDSAIGLSLMAVVGPQNFMSFLEGFHAVDEHFRNTPLEKNVPVLMGLLGVWYDDFLGAQSHAVLPYSQDLARFPAYLQQLTMESNGKSVRIDGTPVTAPTGEIYWGEPGTNGQHAFFQLLHQGTQLVPADFIGFATPNDDLPTADGTGSMHDLLMSNFFAQTKVLAFGKTADEITAEGVDPSIVPHKVMPGNRPTTTILAPALTPSVLGQLIALYEHIVFTEGTIWSINSFDQWGVELGKKQAGELLPAVTGEKGVDTGDASTDSLISWYRENRK</sequence>
<keyword id="KW-0963">Cytoplasm</keyword>
<keyword id="KW-0312">Gluconeogenesis</keyword>
<keyword id="KW-0324">Glycolysis</keyword>
<keyword id="KW-0413">Isomerase</keyword>
<keyword id="KW-1185">Reference proteome</keyword>
<reference key="1">
    <citation type="journal article" date="2008" name="J. Biotechnol.">
        <title>Ultrafast pyrosequencing of Corynebacterium kroppenstedtii DSM44385 revealed insights into the physiology of a lipophilic corynebacterium that lacks mycolic acids.</title>
        <authorList>
            <person name="Tauch A."/>
            <person name="Schneider J."/>
            <person name="Szczepanowski R."/>
            <person name="Tilker A."/>
            <person name="Viehoever P."/>
            <person name="Gartemann K.-H."/>
            <person name="Arnold W."/>
            <person name="Blom J."/>
            <person name="Brinkrolf K."/>
            <person name="Brune I."/>
            <person name="Goetker S."/>
            <person name="Weisshaar B."/>
            <person name="Goesmann A."/>
            <person name="Droege M."/>
            <person name="Puehler A."/>
        </authorList>
    </citation>
    <scope>NUCLEOTIDE SEQUENCE [LARGE SCALE GENOMIC DNA]</scope>
    <source>
        <strain>DSM 44385 / JCM 11950 / CIP 105744 / CCUG 35717</strain>
    </source>
</reference>
<proteinExistence type="inferred from homology"/>
<name>G6PI_CORK4</name>
<gene>
    <name evidence="1" type="primary">pgi</name>
    <name type="ordered locus">ckrop_0469</name>
</gene>
<accession>C4LHE0</accession>
<protein>
    <recommendedName>
        <fullName evidence="1">Glucose-6-phosphate isomerase</fullName>
        <shortName evidence="1">GPI</shortName>
        <ecNumber evidence="1">5.3.1.9</ecNumber>
    </recommendedName>
    <alternativeName>
        <fullName evidence="1">Phosphoglucose isomerase</fullName>
        <shortName evidence="1">PGI</shortName>
    </alternativeName>
    <alternativeName>
        <fullName evidence="1">Phosphohexose isomerase</fullName>
        <shortName evidence="1">PHI</shortName>
    </alternativeName>
</protein>
<feature type="chain" id="PRO_1000206360" description="Glucose-6-phosphate isomerase">
    <location>
        <begin position="1"/>
        <end position="556"/>
    </location>
</feature>
<feature type="active site" description="Proton donor" evidence="1">
    <location>
        <position position="364"/>
    </location>
</feature>
<feature type="active site" evidence="1">
    <location>
        <position position="395"/>
    </location>
</feature>
<feature type="active site" evidence="1">
    <location>
        <position position="521"/>
    </location>
</feature>
<organism>
    <name type="scientific">Corynebacterium kroppenstedtii (strain DSM 44385 / JCM 11950 / CIP 105744 / CCUG 35717)</name>
    <dbReference type="NCBI Taxonomy" id="645127"/>
    <lineage>
        <taxon>Bacteria</taxon>
        <taxon>Bacillati</taxon>
        <taxon>Actinomycetota</taxon>
        <taxon>Actinomycetes</taxon>
        <taxon>Mycobacteriales</taxon>
        <taxon>Corynebacteriaceae</taxon>
        <taxon>Corynebacterium</taxon>
    </lineage>
</organism>
<dbReference type="EC" id="5.3.1.9" evidence="1"/>
<dbReference type="EMBL" id="CP001620">
    <property type="protein sequence ID" value="ACR17245.1"/>
    <property type="molecule type" value="Genomic_DNA"/>
</dbReference>
<dbReference type="RefSeq" id="WP_012731133.1">
    <property type="nucleotide sequence ID" value="NC_012704.1"/>
</dbReference>
<dbReference type="SMR" id="C4LHE0"/>
<dbReference type="STRING" id="645127.ckrop_0469"/>
<dbReference type="KEGG" id="ckp:ckrop_0469"/>
<dbReference type="eggNOG" id="COG0166">
    <property type="taxonomic scope" value="Bacteria"/>
</dbReference>
<dbReference type="HOGENOM" id="CLU_017947_3_1_11"/>
<dbReference type="OrthoDB" id="140919at2"/>
<dbReference type="UniPathway" id="UPA00109">
    <property type="reaction ID" value="UER00181"/>
</dbReference>
<dbReference type="UniPathway" id="UPA00138"/>
<dbReference type="Proteomes" id="UP000001473">
    <property type="component" value="Chromosome"/>
</dbReference>
<dbReference type="GO" id="GO:0005829">
    <property type="term" value="C:cytosol"/>
    <property type="evidence" value="ECO:0007669"/>
    <property type="project" value="TreeGrafter"/>
</dbReference>
<dbReference type="GO" id="GO:0097367">
    <property type="term" value="F:carbohydrate derivative binding"/>
    <property type="evidence" value="ECO:0007669"/>
    <property type="project" value="InterPro"/>
</dbReference>
<dbReference type="GO" id="GO:0004347">
    <property type="term" value="F:glucose-6-phosphate isomerase activity"/>
    <property type="evidence" value="ECO:0007669"/>
    <property type="project" value="UniProtKB-UniRule"/>
</dbReference>
<dbReference type="GO" id="GO:0048029">
    <property type="term" value="F:monosaccharide binding"/>
    <property type="evidence" value="ECO:0007669"/>
    <property type="project" value="TreeGrafter"/>
</dbReference>
<dbReference type="GO" id="GO:0006094">
    <property type="term" value="P:gluconeogenesis"/>
    <property type="evidence" value="ECO:0007669"/>
    <property type="project" value="UniProtKB-UniRule"/>
</dbReference>
<dbReference type="GO" id="GO:0051156">
    <property type="term" value="P:glucose 6-phosphate metabolic process"/>
    <property type="evidence" value="ECO:0007669"/>
    <property type="project" value="TreeGrafter"/>
</dbReference>
<dbReference type="GO" id="GO:0006096">
    <property type="term" value="P:glycolytic process"/>
    <property type="evidence" value="ECO:0007669"/>
    <property type="project" value="UniProtKB-UniRule"/>
</dbReference>
<dbReference type="CDD" id="cd05015">
    <property type="entry name" value="SIS_PGI_1"/>
    <property type="match status" value="1"/>
</dbReference>
<dbReference type="CDD" id="cd05016">
    <property type="entry name" value="SIS_PGI_2"/>
    <property type="match status" value="1"/>
</dbReference>
<dbReference type="FunFam" id="3.40.50.10490:FF:000018">
    <property type="entry name" value="Glucose-6-phosphate isomerase"/>
    <property type="match status" value="1"/>
</dbReference>
<dbReference type="Gene3D" id="1.10.1390.10">
    <property type="match status" value="1"/>
</dbReference>
<dbReference type="Gene3D" id="3.40.50.10490">
    <property type="entry name" value="Glucose-6-phosphate isomerase like protein, domain 1"/>
    <property type="match status" value="2"/>
</dbReference>
<dbReference type="HAMAP" id="MF_00473">
    <property type="entry name" value="G6P_isomerase"/>
    <property type="match status" value="1"/>
</dbReference>
<dbReference type="InterPro" id="IPR001672">
    <property type="entry name" value="G6P_Isomerase"/>
</dbReference>
<dbReference type="InterPro" id="IPR023096">
    <property type="entry name" value="G6P_Isomerase_C"/>
</dbReference>
<dbReference type="InterPro" id="IPR018189">
    <property type="entry name" value="Phosphoglucose_isomerase_CS"/>
</dbReference>
<dbReference type="InterPro" id="IPR046348">
    <property type="entry name" value="SIS_dom_sf"/>
</dbReference>
<dbReference type="InterPro" id="IPR035476">
    <property type="entry name" value="SIS_PGI_1"/>
</dbReference>
<dbReference type="InterPro" id="IPR035482">
    <property type="entry name" value="SIS_PGI_2"/>
</dbReference>
<dbReference type="NCBIfam" id="NF001211">
    <property type="entry name" value="PRK00179.1"/>
    <property type="match status" value="1"/>
</dbReference>
<dbReference type="PANTHER" id="PTHR11469">
    <property type="entry name" value="GLUCOSE-6-PHOSPHATE ISOMERASE"/>
    <property type="match status" value="1"/>
</dbReference>
<dbReference type="PANTHER" id="PTHR11469:SF1">
    <property type="entry name" value="GLUCOSE-6-PHOSPHATE ISOMERASE"/>
    <property type="match status" value="1"/>
</dbReference>
<dbReference type="Pfam" id="PF00342">
    <property type="entry name" value="PGI"/>
    <property type="match status" value="1"/>
</dbReference>
<dbReference type="PRINTS" id="PR00662">
    <property type="entry name" value="G6PISOMERASE"/>
</dbReference>
<dbReference type="SUPFAM" id="SSF53697">
    <property type="entry name" value="SIS domain"/>
    <property type="match status" value="1"/>
</dbReference>
<dbReference type="PROSITE" id="PS00765">
    <property type="entry name" value="P_GLUCOSE_ISOMERASE_1"/>
    <property type="match status" value="1"/>
</dbReference>
<dbReference type="PROSITE" id="PS00174">
    <property type="entry name" value="P_GLUCOSE_ISOMERASE_2"/>
    <property type="match status" value="1"/>
</dbReference>
<dbReference type="PROSITE" id="PS51463">
    <property type="entry name" value="P_GLUCOSE_ISOMERASE_3"/>
    <property type="match status" value="1"/>
</dbReference>
<evidence type="ECO:0000255" key="1">
    <source>
        <dbReference type="HAMAP-Rule" id="MF_00473"/>
    </source>
</evidence>